<reference key="1">
    <citation type="journal article" date="2005" name="PLoS Biol.">
        <title>The Wolbachia genome of Brugia malayi: endosymbiont evolution within a human pathogenic nematode.</title>
        <authorList>
            <person name="Foster J."/>
            <person name="Ganatra M."/>
            <person name="Kamal I."/>
            <person name="Ware J."/>
            <person name="Makarova K."/>
            <person name="Ivanova N."/>
            <person name="Bhattacharyya A."/>
            <person name="Kapatral V."/>
            <person name="Kumar S."/>
            <person name="Posfai J."/>
            <person name="Vincze T."/>
            <person name="Ingram J."/>
            <person name="Moran L."/>
            <person name="Lapidus A."/>
            <person name="Omelchenko M."/>
            <person name="Kyrpides N."/>
            <person name="Ghedin E."/>
            <person name="Wang S."/>
            <person name="Goltsman E."/>
            <person name="Joukov V."/>
            <person name="Ostrovskaya O."/>
            <person name="Tsukerman K."/>
            <person name="Mazur M."/>
            <person name="Comb D."/>
            <person name="Koonin E."/>
            <person name="Slatko B."/>
        </authorList>
    </citation>
    <scope>NUCLEOTIDE SEQUENCE [LARGE SCALE GENOMIC DNA]</scope>
    <source>
        <strain>TRS</strain>
    </source>
</reference>
<proteinExistence type="inferred from homology"/>
<protein>
    <recommendedName>
        <fullName evidence="1">Phosphoglycerate kinase</fullName>
        <ecNumber evidence="1">2.7.2.3</ecNumber>
    </recommendedName>
</protein>
<dbReference type="EC" id="2.7.2.3" evidence="1"/>
<dbReference type="EMBL" id="AE017321">
    <property type="protein sequence ID" value="AAW71272.1"/>
    <property type="molecule type" value="Genomic_DNA"/>
</dbReference>
<dbReference type="SMR" id="Q5GRV2"/>
<dbReference type="STRING" id="292805.Wbm0684"/>
<dbReference type="KEGG" id="wbm:Wbm0684"/>
<dbReference type="eggNOG" id="COG0126">
    <property type="taxonomic scope" value="Bacteria"/>
</dbReference>
<dbReference type="HOGENOM" id="CLU_025427_0_2_5"/>
<dbReference type="UniPathway" id="UPA00109">
    <property type="reaction ID" value="UER00185"/>
</dbReference>
<dbReference type="Proteomes" id="UP000000534">
    <property type="component" value="Chromosome"/>
</dbReference>
<dbReference type="GO" id="GO:0005829">
    <property type="term" value="C:cytosol"/>
    <property type="evidence" value="ECO:0007669"/>
    <property type="project" value="TreeGrafter"/>
</dbReference>
<dbReference type="GO" id="GO:0043531">
    <property type="term" value="F:ADP binding"/>
    <property type="evidence" value="ECO:0007669"/>
    <property type="project" value="TreeGrafter"/>
</dbReference>
<dbReference type="GO" id="GO:0005524">
    <property type="term" value="F:ATP binding"/>
    <property type="evidence" value="ECO:0007669"/>
    <property type="project" value="UniProtKB-KW"/>
</dbReference>
<dbReference type="GO" id="GO:0004618">
    <property type="term" value="F:phosphoglycerate kinase activity"/>
    <property type="evidence" value="ECO:0007669"/>
    <property type="project" value="UniProtKB-UniRule"/>
</dbReference>
<dbReference type="GO" id="GO:0006094">
    <property type="term" value="P:gluconeogenesis"/>
    <property type="evidence" value="ECO:0007669"/>
    <property type="project" value="TreeGrafter"/>
</dbReference>
<dbReference type="GO" id="GO:0006096">
    <property type="term" value="P:glycolytic process"/>
    <property type="evidence" value="ECO:0007669"/>
    <property type="project" value="UniProtKB-UniRule"/>
</dbReference>
<dbReference type="FunFam" id="3.40.50.1260:FF:000006">
    <property type="entry name" value="Phosphoglycerate kinase"/>
    <property type="match status" value="1"/>
</dbReference>
<dbReference type="FunFam" id="3.40.50.1260:FF:000031">
    <property type="entry name" value="Phosphoglycerate kinase 1"/>
    <property type="match status" value="1"/>
</dbReference>
<dbReference type="Gene3D" id="3.40.50.1260">
    <property type="entry name" value="Phosphoglycerate kinase, N-terminal domain"/>
    <property type="match status" value="2"/>
</dbReference>
<dbReference type="HAMAP" id="MF_00145">
    <property type="entry name" value="Phosphoglyc_kinase"/>
    <property type="match status" value="1"/>
</dbReference>
<dbReference type="InterPro" id="IPR001576">
    <property type="entry name" value="Phosphoglycerate_kinase"/>
</dbReference>
<dbReference type="InterPro" id="IPR015824">
    <property type="entry name" value="Phosphoglycerate_kinase_N"/>
</dbReference>
<dbReference type="InterPro" id="IPR036043">
    <property type="entry name" value="Phosphoglycerate_kinase_sf"/>
</dbReference>
<dbReference type="PANTHER" id="PTHR11406">
    <property type="entry name" value="PHOSPHOGLYCERATE KINASE"/>
    <property type="match status" value="1"/>
</dbReference>
<dbReference type="PANTHER" id="PTHR11406:SF23">
    <property type="entry name" value="PHOSPHOGLYCERATE KINASE 1, CHLOROPLASTIC-RELATED"/>
    <property type="match status" value="1"/>
</dbReference>
<dbReference type="Pfam" id="PF00162">
    <property type="entry name" value="PGK"/>
    <property type="match status" value="1"/>
</dbReference>
<dbReference type="PIRSF" id="PIRSF000724">
    <property type="entry name" value="Pgk"/>
    <property type="match status" value="1"/>
</dbReference>
<dbReference type="PRINTS" id="PR00477">
    <property type="entry name" value="PHGLYCKINASE"/>
</dbReference>
<dbReference type="SUPFAM" id="SSF53748">
    <property type="entry name" value="Phosphoglycerate kinase"/>
    <property type="match status" value="1"/>
</dbReference>
<evidence type="ECO:0000255" key="1">
    <source>
        <dbReference type="HAMAP-Rule" id="MF_00145"/>
    </source>
</evidence>
<keyword id="KW-0067">ATP-binding</keyword>
<keyword id="KW-0963">Cytoplasm</keyword>
<keyword id="KW-0324">Glycolysis</keyword>
<keyword id="KW-0418">Kinase</keyword>
<keyword id="KW-0547">Nucleotide-binding</keyword>
<keyword id="KW-1185">Reference proteome</keyword>
<keyword id="KW-0808">Transferase</keyword>
<feature type="chain" id="PRO_1000096392" description="Phosphoglycerate kinase">
    <location>
        <begin position="1"/>
        <end position="399"/>
    </location>
</feature>
<feature type="binding site" evidence="1">
    <location>
        <begin position="22"/>
        <end position="24"/>
    </location>
    <ligand>
        <name>substrate</name>
    </ligand>
</feature>
<feature type="binding site" evidence="1">
    <location>
        <position position="37"/>
    </location>
    <ligand>
        <name>substrate</name>
    </ligand>
</feature>
<feature type="binding site" evidence="1">
    <location>
        <begin position="60"/>
        <end position="63"/>
    </location>
    <ligand>
        <name>substrate</name>
    </ligand>
</feature>
<feature type="binding site" evidence="1">
    <location>
        <position position="118"/>
    </location>
    <ligand>
        <name>substrate</name>
    </ligand>
</feature>
<feature type="binding site" evidence="1">
    <location>
        <position position="151"/>
    </location>
    <ligand>
        <name>substrate</name>
    </ligand>
</feature>
<feature type="binding site" evidence="1">
    <location>
        <position position="201"/>
    </location>
    <ligand>
        <name>ATP</name>
        <dbReference type="ChEBI" id="CHEBI:30616"/>
    </ligand>
</feature>
<feature type="binding site" evidence="1">
    <location>
        <position position="322"/>
    </location>
    <ligand>
        <name>ATP</name>
        <dbReference type="ChEBI" id="CHEBI:30616"/>
    </ligand>
</feature>
<feature type="binding site" evidence="1">
    <location>
        <begin position="352"/>
        <end position="355"/>
    </location>
    <ligand>
        <name>ATP</name>
        <dbReference type="ChEBI" id="CHEBI:30616"/>
    </ligand>
</feature>
<sequence>MMNIPNIENCDLHGKAVLLRVDFNIPIKNGKVHDATRVLRSLPTIRHLVNAGAKVIIISHFGRPRAKDNNLSLKNVVKTLSQLLNKEVKFVDDCIGKKVQKVVNAIAIRDVILLENLRFYKEEEQNDANFAKQLASLADVYVNDAFSCSHRAHASISRITEFLPSYAGFCLQDELRYLEKAVSFEAKPITAIVGGAKISTKIKMLIRLAEKVDYLVLGGAIANNFLLFNKVNIGKSFFQNGVDSLLHDVVKIADKNNCKIVIPEDVLIAVNSDYSTCILRKTESVLDNDVILDIGPQTLSTISSIVASSKALLWNGPIGVFEHSAFANGTIEVMKVVSDSTHKGKLTSVIGGGDSLSAINAAGLTDKDFTYVSTGGGAFLSWLSGDKMPGIAALQSMLN</sequence>
<gene>
    <name evidence="1" type="primary">pgk</name>
    <name type="ordered locus">Wbm0684</name>
</gene>
<name>PGK_WOLTR</name>
<organism>
    <name type="scientific">Wolbachia sp. subsp. Brugia malayi (strain TRS)</name>
    <dbReference type="NCBI Taxonomy" id="292805"/>
    <lineage>
        <taxon>Bacteria</taxon>
        <taxon>Pseudomonadati</taxon>
        <taxon>Pseudomonadota</taxon>
        <taxon>Alphaproteobacteria</taxon>
        <taxon>Rickettsiales</taxon>
        <taxon>Anaplasmataceae</taxon>
        <taxon>Wolbachieae</taxon>
        <taxon>Wolbachia</taxon>
    </lineage>
</organism>
<accession>Q5GRV2</accession>
<comment type="catalytic activity">
    <reaction evidence="1">
        <text>(2R)-3-phosphoglycerate + ATP = (2R)-3-phospho-glyceroyl phosphate + ADP</text>
        <dbReference type="Rhea" id="RHEA:14801"/>
        <dbReference type="ChEBI" id="CHEBI:30616"/>
        <dbReference type="ChEBI" id="CHEBI:57604"/>
        <dbReference type="ChEBI" id="CHEBI:58272"/>
        <dbReference type="ChEBI" id="CHEBI:456216"/>
        <dbReference type="EC" id="2.7.2.3"/>
    </reaction>
</comment>
<comment type="pathway">
    <text evidence="1">Carbohydrate degradation; glycolysis; pyruvate from D-glyceraldehyde 3-phosphate: step 2/5.</text>
</comment>
<comment type="subunit">
    <text evidence="1">Monomer.</text>
</comment>
<comment type="subcellular location">
    <subcellularLocation>
        <location evidence="1">Cytoplasm</location>
    </subcellularLocation>
</comment>
<comment type="similarity">
    <text evidence="1">Belongs to the phosphoglycerate kinase family.</text>
</comment>